<feature type="chain" id="PRO_1000126740" description="Large ribosomal subunit protein bL31">
    <location>
        <begin position="1"/>
        <end position="70"/>
    </location>
</feature>
<feature type="binding site" evidence="1">
    <location>
        <position position="16"/>
    </location>
    <ligand>
        <name>Zn(2+)</name>
        <dbReference type="ChEBI" id="CHEBI:29105"/>
    </ligand>
</feature>
<feature type="binding site" evidence="1">
    <location>
        <position position="18"/>
    </location>
    <ligand>
        <name>Zn(2+)</name>
        <dbReference type="ChEBI" id="CHEBI:29105"/>
    </ligand>
</feature>
<feature type="binding site" evidence="1">
    <location>
        <position position="37"/>
    </location>
    <ligand>
        <name>Zn(2+)</name>
        <dbReference type="ChEBI" id="CHEBI:29105"/>
    </ligand>
</feature>
<feature type="binding site" evidence="1">
    <location>
        <position position="40"/>
    </location>
    <ligand>
        <name>Zn(2+)</name>
        <dbReference type="ChEBI" id="CHEBI:29105"/>
    </ligand>
</feature>
<feature type="modified residue" description="N6-acetyllysine" evidence="1">
    <location>
        <position position="8"/>
    </location>
</feature>
<proteinExistence type="inferred from homology"/>
<organism>
    <name type="scientific">Shigella boydii serotype 18 (strain CDC 3083-94 / BS512)</name>
    <dbReference type="NCBI Taxonomy" id="344609"/>
    <lineage>
        <taxon>Bacteria</taxon>
        <taxon>Pseudomonadati</taxon>
        <taxon>Pseudomonadota</taxon>
        <taxon>Gammaproteobacteria</taxon>
        <taxon>Enterobacterales</taxon>
        <taxon>Enterobacteriaceae</taxon>
        <taxon>Shigella</taxon>
    </lineage>
</organism>
<gene>
    <name evidence="1" type="primary">rpmE</name>
    <name type="ordered locus">SbBS512_E4419</name>
</gene>
<keyword id="KW-0007">Acetylation</keyword>
<keyword id="KW-0479">Metal-binding</keyword>
<keyword id="KW-1185">Reference proteome</keyword>
<keyword id="KW-0687">Ribonucleoprotein</keyword>
<keyword id="KW-0689">Ribosomal protein</keyword>
<keyword id="KW-0694">RNA-binding</keyword>
<keyword id="KW-0699">rRNA-binding</keyword>
<keyword id="KW-0862">Zinc</keyword>
<dbReference type="EMBL" id="CP001063">
    <property type="protein sequence ID" value="ACD10435.1"/>
    <property type="molecule type" value="Genomic_DNA"/>
</dbReference>
<dbReference type="RefSeq" id="WP_000710769.1">
    <property type="nucleotide sequence ID" value="NC_010658.1"/>
</dbReference>
<dbReference type="SMR" id="B2TWD3"/>
<dbReference type="STRING" id="344609.SbBS512_E4419"/>
<dbReference type="GeneID" id="93777962"/>
<dbReference type="KEGG" id="sbc:SbBS512_E4419"/>
<dbReference type="HOGENOM" id="CLU_114306_4_3_6"/>
<dbReference type="Proteomes" id="UP000001030">
    <property type="component" value="Chromosome"/>
</dbReference>
<dbReference type="GO" id="GO:1990904">
    <property type="term" value="C:ribonucleoprotein complex"/>
    <property type="evidence" value="ECO:0007669"/>
    <property type="project" value="UniProtKB-KW"/>
</dbReference>
<dbReference type="GO" id="GO:0005840">
    <property type="term" value="C:ribosome"/>
    <property type="evidence" value="ECO:0007669"/>
    <property type="project" value="UniProtKB-KW"/>
</dbReference>
<dbReference type="GO" id="GO:0046872">
    <property type="term" value="F:metal ion binding"/>
    <property type="evidence" value="ECO:0007669"/>
    <property type="project" value="UniProtKB-KW"/>
</dbReference>
<dbReference type="GO" id="GO:0019843">
    <property type="term" value="F:rRNA binding"/>
    <property type="evidence" value="ECO:0007669"/>
    <property type="project" value="UniProtKB-KW"/>
</dbReference>
<dbReference type="GO" id="GO:0003735">
    <property type="term" value="F:structural constituent of ribosome"/>
    <property type="evidence" value="ECO:0007669"/>
    <property type="project" value="InterPro"/>
</dbReference>
<dbReference type="GO" id="GO:0006412">
    <property type="term" value="P:translation"/>
    <property type="evidence" value="ECO:0007669"/>
    <property type="project" value="UniProtKB-UniRule"/>
</dbReference>
<dbReference type="FunFam" id="4.10.830.30:FF:000001">
    <property type="entry name" value="50S ribosomal protein L31"/>
    <property type="match status" value="1"/>
</dbReference>
<dbReference type="Gene3D" id="4.10.830.30">
    <property type="entry name" value="Ribosomal protein L31"/>
    <property type="match status" value="1"/>
</dbReference>
<dbReference type="HAMAP" id="MF_00501">
    <property type="entry name" value="Ribosomal_bL31_1"/>
    <property type="match status" value="1"/>
</dbReference>
<dbReference type="InterPro" id="IPR034704">
    <property type="entry name" value="Ribosomal_bL28/bL31-like_sf"/>
</dbReference>
<dbReference type="InterPro" id="IPR002150">
    <property type="entry name" value="Ribosomal_bL31"/>
</dbReference>
<dbReference type="InterPro" id="IPR027491">
    <property type="entry name" value="Ribosomal_bL31_A"/>
</dbReference>
<dbReference type="InterPro" id="IPR042105">
    <property type="entry name" value="Ribosomal_bL31_sf"/>
</dbReference>
<dbReference type="NCBIfam" id="TIGR00105">
    <property type="entry name" value="L31"/>
    <property type="match status" value="1"/>
</dbReference>
<dbReference type="NCBIfam" id="NF000612">
    <property type="entry name" value="PRK00019.1"/>
    <property type="match status" value="1"/>
</dbReference>
<dbReference type="NCBIfam" id="NF001809">
    <property type="entry name" value="PRK00528.1"/>
    <property type="match status" value="1"/>
</dbReference>
<dbReference type="PANTHER" id="PTHR33280">
    <property type="entry name" value="50S RIBOSOMAL PROTEIN L31, CHLOROPLASTIC"/>
    <property type="match status" value="1"/>
</dbReference>
<dbReference type="PANTHER" id="PTHR33280:SF6">
    <property type="entry name" value="LARGE RIBOSOMAL SUBUNIT PROTEIN BL31A"/>
    <property type="match status" value="1"/>
</dbReference>
<dbReference type="Pfam" id="PF01197">
    <property type="entry name" value="Ribosomal_L31"/>
    <property type="match status" value="1"/>
</dbReference>
<dbReference type="PRINTS" id="PR01249">
    <property type="entry name" value="RIBOSOMALL31"/>
</dbReference>
<dbReference type="SUPFAM" id="SSF143800">
    <property type="entry name" value="L28p-like"/>
    <property type="match status" value="1"/>
</dbReference>
<dbReference type="PROSITE" id="PS01143">
    <property type="entry name" value="RIBOSOMAL_L31"/>
    <property type="match status" value="1"/>
</dbReference>
<name>RL31_SHIB3</name>
<reference key="1">
    <citation type="submission" date="2008-05" db="EMBL/GenBank/DDBJ databases">
        <title>Complete sequence of Shigella boydii serotype 18 strain BS512.</title>
        <authorList>
            <person name="Rasko D.A."/>
            <person name="Rosovitz M."/>
            <person name="Maurelli A.T."/>
            <person name="Myers G."/>
            <person name="Seshadri R."/>
            <person name="Cer R."/>
            <person name="Jiang L."/>
            <person name="Ravel J."/>
            <person name="Sebastian Y."/>
        </authorList>
    </citation>
    <scope>NUCLEOTIDE SEQUENCE [LARGE SCALE GENOMIC DNA]</scope>
    <source>
        <strain>CDC 3083-94 / BS512</strain>
    </source>
</reference>
<accession>B2TWD3</accession>
<sequence>MKKDIHPKYEEITASCSCGNVMKIRSTVGHDLNLDVCSKCHPFFTGKQRDVATGGRVDRFNKRFNIPGSK</sequence>
<evidence type="ECO:0000255" key="1">
    <source>
        <dbReference type="HAMAP-Rule" id="MF_00501"/>
    </source>
</evidence>
<evidence type="ECO:0000305" key="2"/>
<comment type="function">
    <text evidence="1">Binds the 23S rRNA.</text>
</comment>
<comment type="cofactor">
    <cofactor evidence="1">
        <name>Zn(2+)</name>
        <dbReference type="ChEBI" id="CHEBI:29105"/>
    </cofactor>
    <text evidence="1">Binds 1 zinc ion per subunit.</text>
</comment>
<comment type="subunit">
    <text evidence="1">Part of the 50S ribosomal subunit.</text>
</comment>
<comment type="similarity">
    <text evidence="1">Belongs to the bacterial ribosomal protein bL31 family. Type A subfamily.</text>
</comment>
<protein>
    <recommendedName>
        <fullName evidence="1">Large ribosomal subunit protein bL31</fullName>
    </recommendedName>
    <alternativeName>
        <fullName evidence="2">50S ribosomal protein L31</fullName>
    </alternativeName>
</protein>